<feature type="chain" id="PRO_0000104358" description="Large ribosomal subunit protein uL11">
    <location>
        <begin position="1"/>
        <end position="142"/>
    </location>
</feature>
<dbReference type="EMBL" id="AE014299">
    <property type="protein sequence ID" value="AAN53305.1"/>
    <property type="molecule type" value="Genomic_DNA"/>
</dbReference>
<dbReference type="RefSeq" id="NP_715860.1">
    <property type="nucleotide sequence ID" value="NC_004347.2"/>
</dbReference>
<dbReference type="RefSeq" id="WP_011070607.1">
    <property type="nucleotide sequence ID" value="NZ_CP053946.1"/>
</dbReference>
<dbReference type="SMR" id="Q8EK78"/>
<dbReference type="STRING" id="211586.SO_0220"/>
<dbReference type="PaxDb" id="211586-SO_0220"/>
<dbReference type="KEGG" id="son:SO_0220"/>
<dbReference type="PATRIC" id="fig|211586.12.peg.208"/>
<dbReference type="eggNOG" id="COG0080">
    <property type="taxonomic scope" value="Bacteria"/>
</dbReference>
<dbReference type="HOGENOM" id="CLU_074237_2_0_6"/>
<dbReference type="OrthoDB" id="9802408at2"/>
<dbReference type="PhylomeDB" id="Q8EK78"/>
<dbReference type="BioCyc" id="SONE211586:G1GMP-209-MONOMER"/>
<dbReference type="Proteomes" id="UP000008186">
    <property type="component" value="Chromosome"/>
</dbReference>
<dbReference type="GO" id="GO:0022625">
    <property type="term" value="C:cytosolic large ribosomal subunit"/>
    <property type="evidence" value="ECO:0000318"/>
    <property type="project" value="GO_Central"/>
</dbReference>
<dbReference type="GO" id="GO:0070180">
    <property type="term" value="F:large ribosomal subunit rRNA binding"/>
    <property type="evidence" value="ECO:0000318"/>
    <property type="project" value="GO_Central"/>
</dbReference>
<dbReference type="GO" id="GO:0003735">
    <property type="term" value="F:structural constituent of ribosome"/>
    <property type="evidence" value="ECO:0000318"/>
    <property type="project" value="GO_Central"/>
</dbReference>
<dbReference type="GO" id="GO:0006412">
    <property type="term" value="P:translation"/>
    <property type="evidence" value="ECO:0000318"/>
    <property type="project" value="GO_Central"/>
</dbReference>
<dbReference type="CDD" id="cd00349">
    <property type="entry name" value="Ribosomal_L11"/>
    <property type="match status" value="1"/>
</dbReference>
<dbReference type="FunFam" id="1.10.10.250:FF:000001">
    <property type="entry name" value="50S ribosomal protein L11"/>
    <property type="match status" value="1"/>
</dbReference>
<dbReference type="FunFam" id="3.30.1550.10:FF:000001">
    <property type="entry name" value="50S ribosomal protein L11"/>
    <property type="match status" value="1"/>
</dbReference>
<dbReference type="Gene3D" id="1.10.10.250">
    <property type="entry name" value="Ribosomal protein L11, C-terminal domain"/>
    <property type="match status" value="1"/>
</dbReference>
<dbReference type="Gene3D" id="3.30.1550.10">
    <property type="entry name" value="Ribosomal protein L11/L12, N-terminal domain"/>
    <property type="match status" value="1"/>
</dbReference>
<dbReference type="HAMAP" id="MF_00736">
    <property type="entry name" value="Ribosomal_uL11"/>
    <property type="match status" value="1"/>
</dbReference>
<dbReference type="InterPro" id="IPR000911">
    <property type="entry name" value="Ribosomal_uL11"/>
</dbReference>
<dbReference type="InterPro" id="IPR006519">
    <property type="entry name" value="Ribosomal_uL11_bac-typ"/>
</dbReference>
<dbReference type="InterPro" id="IPR020783">
    <property type="entry name" value="Ribosomal_uL11_C"/>
</dbReference>
<dbReference type="InterPro" id="IPR036769">
    <property type="entry name" value="Ribosomal_uL11_C_sf"/>
</dbReference>
<dbReference type="InterPro" id="IPR020785">
    <property type="entry name" value="Ribosomal_uL11_CS"/>
</dbReference>
<dbReference type="InterPro" id="IPR020784">
    <property type="entry name" value="Ribosomal_uL11_N"/>
</dbReference>
<dbReference type="InterPro" id="IPR036796">
    <property type="entry name" value="Ribosomal_uL11_N_sf"/>
</dbReference>
<dbReference type="NCBIfam" id="TIGR01632">
    <property type="entry name" value="L11_bact"/>
    <property type="match status" value="1"/>
</dbReference>
<dbReference type="PANTHER" id="PTHR11661">
    <property type="entry name" value="60S RIBOSOMAL PROTEIN L12"/>
    <property type="match status" value="1"/>
</dbReference>
<dbReference type="PANTHER" id="PTHR11661:SF1">
    <property type="entry name" value="LARGE RIBOSOMAL SUBUNIT PROTEIN UL11M"/>
    <property type="match status" value="1"/>
</dbReference>
<dbReference type="Pfam" id="PF00298">
    <property type="entry name" value="Ribosomal_L11"/>
    <property type="match status" value="1"/>
</dbReference>
<dbReference type="Pfam" id="PF03946">
    <property type="entry name" value="Ribosomal_L11_N"/>
    <property type="match status" value="1"/>
</dbReference>
<dbReference type="SMART" id="SM00649">
    <property type="entry name" value="RL11"/>
    <property type="match status" value="1"/>
</dbReference>
<dbReference type="SUPFAM" id="SSF54747">
    <property type="entry name" value="Ribosomal L11/L12e N-terminal domain"/>
    <property type="match status" value="1"/>
</dbReference>
<dbReference type="SUPFAM" id="SSF46906">
    <property type="entry name" value="Ribosomal protein L11, C-terminal domain"/>
    <property type="match status" value="1"/>
</dbReference>
<dbReference type="PROSITE" id="PS00359">
    <property type="entry name" value="RIBOSOMAL_L11"/>
    <property type="match status" value="1"/>
</dbReference>
<reference key="1">
    <citation type="journal article" date="2002" name="Nat. Biotechnol.">
        <title>Genome sequence of the dissimilatory metal ion-reducing bacterium Shewanella oneidensis.</title>
        <authorList>
            <person name="Heidelberg J.F."/>
            <person name="Paulsen I.T."/>
            <person name="Nelson K.E."/>
            <person name="Gaidos E.J."/>
            <person name="Nelson W.C."/>
            <person name="Read T.D."/>
            <person name="Eisen J.A."/>
            <person name="Seshadri R."/>
            <person name="Ward N.L."/>
            <person name="Methe B.A."/>
            <person name="Clayton R.A."/>
            <person name="Meyer T."/>
            <person name="Tsapin A."/>
            <person name="Scott J."/>
            <person name="Beanan M.J."/>
            <person name="Brinkac L.M."/>
            <person name="Daugherty S.C."/>
            <person name="DeBoy R.T."/>
            <person name="Dodson R.J."/>
            <person name="Durkin A.S."/>
            <person name="Haft D.H."/>
            <person name="Kolonay J.F."/>
            <person name="Madupu R."/>
            <person name="Peterson J.D."/>
            <person name="Umayam L.A."/>
            <person name="White O."/>
            <person name="Wolf A.M."/>
            <person name="Vamathevan J.J."/>
            <person name="Weidman J.F."/>
            <person name="Impraim M."/>
            <person name="Lee K."/>
            <person name="Berry K.J."/>
            <person name="Lee C."/>
            <person name="Mueller J."/>
            <person name="Khouri H.M."/>
            <person name="Gill J."/>
            <person name="Utterback T.R."/>
            <person name="McDonald L.A."/>
            <person name="Feldblyum T.V."/>
            <person name="Smith H.O."/>
            <person name="Venter J.C."/>
            <person name="Nealson K.H."/>
            <person name="Fraser C.M."/>
        </authorList>
    </citation>
    <scope>NUCLEOTIDE SEQUENCE [LARGE SCALE GENOMIC DNA]</scope>
    <source>
        <strain>ATCC 700550 / JCM 31522 / CIP 106686 / LMG 19005 / NCIMB 14063 / MR-1</strain>
    </source>
</reference>
<evidence type="ECO:0000255" key="1">
    <source>
        <dbReference type="HAMAP-Rule" id="MF_00736"/>
    </source>
</evidence>
<evidence type="ECO:0000305" key="2"/>
<proteinExistence type="inferred from homology"/>
<gene>
    <name evidence="1" type="primary">rplK</name>
    <name type="ordered locus">SO_0220</name>
</gene>
<comment type="function">
    <text evidence="1">Forms part of the ribosomal stalk which helps the ribosome interact with GTP-bound translation factors.</text>
</comment>
<comment type="subunit">
    <text evidence="1">Part of the ribosomal stalk of the 50S ribosomal subunit. Interacts with L10 and the large rRNA to form the base of the stalk. L10 forms an elongated spine to which L12 dimers bind in a sequential fashion forming a multimeric L10(L12)X complex.</text>
</comment>
<comment type="PTM">
    <text evidence="1">One or more lysine residues are methylated.</text>
</comment>
<comment type="similarity">
    <text evidence="1">Belongs to the universal ribosomal protein uL11 family.</text>
</comment>
<accession>Q8EK78</accession>
<keyword id="KW-0488">Methylation</keyword>
<keyword id="KW-1185">Reference proteome</keyword>
<keyword id="KW-0687">Ribonucleoprotein</keyword>
<keyword id="KW-0689">Ribosomal protein</keyword>
<keyword id="KW-0694">RNA-binding</keyword>
<keyword id="KW-0699">rRNA-binding</keyword>
<name>RL11_SHEON</name>
<organism>
    <name type="scientific">Shewanella oneidensis (strain ATCC 700550 / JCM 31522 / CIP 106686 / LMG 19005 / NCIMB 14063 / MR-1)</name>
    <dbReference type="NCBI Taxonomy" id="211586"/>
    <lineage>
        <taxon>Bacteria</taxon>
        <taxon>Pseudomonadati</taxon>
        <taxon>Pseudomonadota</taxon>
        <taxon>Gammaproteobacteria</taxon>
        <taxon>Alteromonadales</taxon>
        <taxon>Shewanellaceae</taxon>
        <taxon>Shewanella</taxon>
    </lineage>
</organism>
<protein>
    <recommendedName>
        <fullName evidence="1">Large ribosomal subunit protein uL11</fullName>
    </recommendedName>
    <alternativeName>
        <fullName evidence="2">50S ribosomal protein L11</fullName>
    </alternativeName>
</protein>
<sequence>MAKKIDAYIKLQVKSGSANPSPPVGPALGQKGVNIMEFCKAFNARTEKMEKGMPIPVVITVYSDRSFTFETKTPPASYLLKTAAGLKSGSPRPNTQKVGTIARAKIQEIAEMKAADMTGADVEAMTRSIEGTARSMGLVVEG</sequence>